<evidence type="ECO:0000255" key="1"/>
<evidence type="ECO:0000255" key="2">
    <source>
        <dbReference type="PROSITE-ProRule" id="PRU00199"/>
    </source>
</evidence>
<evidence type="ECO:0000256" key="3">
    <source>
        <dbReference type="SAM" id="MobiDB-lite"/>
    </source>
</evidence>
<evidence type="ECO:0000305" key="4"/>
<gene>
    <name type="primary">PTCH1</name>
    <name type="synonym">PTC</name>
    <name type="synonym">PTCH</name>
</gene>
<comment type="function">
    <text>Acts as a receptor for sonic hedgehog (SHH), indian hedgehog (IHH) and desert hedgehog (DHH). Associates with the smoothened protein (SMO) to transduce the hedgehog's proteins signal.</text>
</comment>
<comment type="subcellular location">
    <subcellularLocation>
        <location>Membrane</location>
        <topology>Multi-pass membrane protein</topology>
    </subcellularLocation>
</comment>
<comment type="tissue specificity">
    <text>Expression is seen in the embryonic neural tube, sclerotome, visceral mesoderm, and limb bud.</text>
</comment>
<comment type="developmental stage">
    <text>In stage 10 embryo, expression is seen in neural tube, and at lower levels in the notochord, epithelial somites, endoderm and splanchnic mesoderm. At stage 18, PTC is broadly expressed in the neural tube but excluded from the cells of the floor plate. At stage 32, expression occurs in the mesodermal cells of the gastrointestinal tract.</text>
</comment>
<comment type="induction">
    <text evidence="4">Activated by hedgehog; repressed by itself.</text>
</comment>
<comment type="PTM">
    <text>Glycosylation is necessary for SHH binding.</text>
</comment>
<comment type="similarity">
    <text evidence="4">Belongs to the patched family.</text>
</comment>
<accession>Q90693</accession>
<name>PTC1_CHICK</name>
<dbReference type="EMBL" id="U40074">
    <property type="protein sequence ID" value="AAC59898.1"/>
    <property type="molecule type" value="mRNA"/>
</dbReference>
<dbReference type="PIR" id="T18538">
    <property type="entry name" value="T18538"/>
</dbReference>
<dbReference type="SMR" id="Q90693"/>
<dbReference type="DIP" id="DIP-61762N"/>
<dbReference type="FunCoup" id="Q90693">
    <property type="interactions" value="166"/>
</dbReference>
<dbReference type="IntAct" id="Q90693">
    <property type="interactions" value="1"/>
</dbReference>
<dbReference type="STRING" id="9031.ENSGALP00000020572"/>
<dbReference type="GlyCosmos" id="Q90693">
    <property type="glycosylation" value="7 sites, No reported glycans"/>
</dbReference>
<dbReference type="GlyGen" id="Q90693">
    <property type="glycosylation" value="8 sites"/>
</dbReference>
<dbReference type="PaxDb" id="9031-ENSGALP00000020572"/>
<dbReference type="VEuPathDB" id="HostDB:geneid_395806"/>
<dbReference type="eggNOG" id="KOG1935">
    <property type="taxonomic scope" value="Eukaryota"/>
</dbReference>
<dbReference type="InParanoid" id="Q90693"/>
<dbReference type="OrthoDB" id="5873834at2759"/>
<dbReference type="PhylomeDB" id="Q90693"/>
<dbReference type="Proteomes" id="UP000000539">
    <property type="component" value="Unassembled WGS sequence"/>
</dbReference>
<dbReference type="GO" id="GO:0005886">
    <property type="term" value="C:plasma membrane"/>
    <property type="evidence" value="ECO:0000318"/>
    <property type="project" value="GO_Central"/>
</dbReference>
<dbReference type="GO" id="GO:0097108">
    <property type="term" value="F:hedgehog family protein binding"/>
    <property type="evidence" value="ECO:0000318"/>
    <property type="project" value="GO_Central"/>
</dbReference>
<dbReference type="GO" id="GO:0008158">
    <property type="term" value="F:hedgehog receptor activity"/>
    <property type="evidence" value="ECO:0000318"/>
    <property type="project" value="GO_Central"/>
</dbReference>
<dbReference type="GO" id="GO:0005119">
    <property type="term" value="F:smoothened binding"/>
    <property type="evidence" value="ECO:0000318"/>
    <property type="project" value="GO_Central"/>
</dbReference>
<dbReference type="GO" id="GO:0045879">
    <property type="term" value="P:negative regulation of smoothened signaling pathway"/>
    <property type="evidence" value="ECO:0000318"/>
    <property type="project" value="GO_Central"/>
</dbReference>
<dbReference type="GO" id="GO:0007224">
    <property type="term" value="P:smoothened signaling pathway"/>
    <property type="evidence" value="ECO:0000303"/>
    <property type="project" value="Roslin"/>
</dbReference>
<dbReference type="FunFam" id="1.20.1640.10:FF:000007">
    <property type="entry name" value="Protein patched homolog 1"/>
    <property type="match status" value="1"/>
</dbReference>
<dbReference type="FunFam" id="1.20.1640.10:FF:000003">
    <property type="entry name" value="protein patched homolog 1"/>
    <property type="match status" value="1"/>
</dbReference>
<dbReference type="Gene3D" id="1.20.1640.10">
    <property type="entry name" value="Multidrug efflux transporter AcrB transmembrane domain"/>
    <property type="match status" value="2"/>
</dbReference>
<dbReference type="InterPro" id="IPR053958">
    <property type="entry name" value="HMGCR/SNAP/NPC1-like_SSD"/>
</dbReference>
<dbReference type="InterPro" id="IPR000731">
    <property type="entry name" value="SSD"/>
</dbReference>
<dbReference type="InterPro" id="IPR004766">
    <property type="entry name" value="TM_rcpt_patched"/>
</dbReference>
<dbReference type="NCBIfam" id="TIGR00918">
    <property type="entry name" value="2A060602"/>
    <property type="match status" value="1"/>
</dbReference>
<dbReference type="PANTHER" id="PTHR46022">
    <property type="entry name" value="PROTEIN PATCHED"/>
    <property type="match status" value="1"/>
</dbReference>
<dbReference type="PANTHER" id="PTHR46022:SF5">
    <property type="entry name" value="PROTEIN PATCHED HOMOLOG 1"/>
    <property type="match status" value="1"/>
</dbReference>
<dbReference type="Pfam" id="PF12349">
    <property type="entry name" value="Sterol-sensing"/>
    <property type="match status" value="1"/>
</dbReference>
<dbReference type="SUPFAM" id="SSF82866">
    <property type="entry name" value="Multidrug efflux transporter AcrB transmembrane domain"/>
    <property type="match status" value="2"/>
</dbReference>
<dbReference type="PROSITE" id="PS50156">
    <property type="entry name" value="SSD"/>
    <property type="match status" value="1"/>
</dbReference>
<keyword id="KW-0325">Glycoprotein</keyword>
<keyword id="KW-0472">Membrane</keyword>
<keyword id="KW-0675">Receptor</keyword>
<keyword id="KW-1185">Reference proteome</keyword>
<keyword id="KW-0812">Transmembrane</keyword>
<keyword id="KW-1133">Transmembrane helix</keyword>
<protein>
    <recommendedName>
        <fullName>Protein patched homolog 1</fullName>
        <shortName>PTC</shortName>
        <shortName>PTC1</shortName>
    </recommendedName>
</protein>
<proteinExistence type="evidence at protein level"/>
<organism>
    <name type="scientific">Gallus gallus</name>
    <name type="common">Chicken</name>
    <dbReference type="NCBI Taxonomy" id="9031"/>
    <lineage>
        <taxon>Eukaryota</taxon>
        <taxon>Metazoa</taxon>
        <taxon>Chordata</taxon>
        <taxon>Craniata</taxon>
        <taxon>Vertebrata</taxon>
        <taxon>Euteleostomi</taxon>
        <taxon>Archelosauria</taxon>
        <taxon>Archosauria</taxon>
        <taxon>Dinosauria</taxon>
        <taxon>Saurischia</taxon>
        <taxon>Theropoda</taxon>
        <taxon>Coelurosauria</taxon>
        <taxon>Aves</taxon>
        <taxon>Neognathae</taxon>
        <taxon>Galloanserae</taxon>
        <taxon>Galliformes</taxon>
        <taxon>Phasianidae</taxon>
        <taxon>Phasianinae</taxon>
        <taxon>Gallus</taxon>
    </lineage>
</organism>
<feature type="chain" id="PRO_0000205966" description="Protein patched homolog 1">
    <location>
        <begin position="1"/>
        <end position="1442"/>
    </location>
</feature>
<feature type="topological domain" description="Cytoplasmic" evidence="1">
    <location>
        <begin position="1"/>
        <end position="101"/>
    </location>
</feature>
<feature type="transmembrane region" description="Helical" evidence="1">
    <location>
        <begin position="102"/>
        <end position="122"/>
    </location>
</feature>
<feature type="topological domain" description="Extracellular" evidence="1">
    <location>
        <begin position="123"/>
        <end position="436"/>
    </location>
</feature>
<feature type="transmembrane region" description="Helical" evidence="1">
    <location>
        <begin position="437"/>
        <end position="457"/>
    </location>
</feature>
<feature type="topological domain" description="Cytoplasmic" evidence="1">
    <location>
        <begin position="458"/>
        <end position="472"/>
    </location>
</feature>
<feature type="transmembrane region" description="Helical" evidence="1">
    <location>
        <begin position="473"/>
        <end position="493"/>
    </location>
</feature>
<feature type="topological domain" description="Extracellular" evidence="1">
    <location>
        <begin position="494"/>
        <end position="501"/>
    </location>
</feature>
<feature type="transmembrane region" description="Helical" evidence="1">
    <location>
        <begin position="502"/>
        <end position="522"/>
    </location>
</feature>
<feature type="topological domain" description="Cytoplasmic" evidence="1">
    <location>
        <begin position="523"/>
        <end position="547"/>
    </location>
</feature>
<feature type="transmembrane region" description="Helical" evidence="1">
    <location>
        <begin position="548"/>
        <end position="568"/>
    </location>
</feature>
<feature type="topological domain" description="Extracellular" evidence="1">
    <location>
        <begin position="569"/>
        <end position="577"/>
    </location>
</feature>
<feature type="transmembrane region" description="Helical" evidence="1">
    <location>
        <begin position="578"/>
        <end position="598"/>
    </location>
</feature>
<feature type="topological domain" description="Cytoplasmic" evidence="1">
    <location>
        <begin position="599"/>
        <end position="747"/>
    </location>
</feature>
<feature type="transmembrane region" description="Helical" evidence="1">
    <location>
        <begin position="748"/>
        <end position="768"/>
    </location>
</feature>
<feature type="topological domain" description="Extracellular" evidence="1">
    <location>
        <begin position="769"/>
        <end position="1026"/>
    </location>
</feature>
<feature type="transmembrane region" description="Helical" evidence="1">
    <location>
        <begin position="1027"/>
        <end position="1047"/>
    </location>
</feature>
<feature type="topological domain" description="Cytoplasmic" evidence="1">
    <location>
        <begin position="1048"/>
        <end position="1053"/>
    </location>
</feature>
<feature type="transmembrane region" description="Helical" evidence="1">
    <location>
        <begin position="1054"/>
        <end position="1074"/>
    </location>
</feature>
<feature type="topological domain" description="Extracellular" evidence="1">
    <location>
        <begin position="1075"/>
        <end position="1082"/>
    </location>
</feature>
<feature type="transmembrane region" description="Helical" evidence="1">
    <location>
        <begin position="1083"/>
        <end position="1101"/>
    </location>
</feature>
<feature type="topological domain" description="Cytoplasmic" evidence="1">
    <location>
        <begin position="1102"/>
        <end position="1120"/>
    </location>
</feature>
<feature type="transmembrane region" description="Helical" evidence="1">
    <location>
        <begin position="1121"/>
        <end position="1141"/>
    </location>
</feature>
<feature type="topological domain" description="Extracellular" evidence="1">
    <location>
        <begin position="1142"/>
        <end position="1153"/>
    </location>
</feature>
<feature type="transmembrane region" description="Helical" evidence="1">
    <location>
        <begin position="1154"/>
        <end position="1174"/>
    </location>
</feature>
<feature type="topological domain" description="Cytoplasmic" evidence="1">
    <location>
        <begin position="1175"/>
        <end position="1442"/>
    </location>
</feature>
<feature type="domain" description="SSD" evidence="2">
    <location>
        <begin position="438"/>
        <end position="598"/>
    </location>
</feature>
<feature type="region of interest" description="Disordered" evidence="3">
    <location>
        <begin position="1"/>
        <end position="45"/>
    </location>
</feature>
<feature type="region of interest" description="Disordered" evidence="3">
    <location>
        <begin position="1188"/>
        <end position="1231"/>
    </location>
</feature>
<feature type="region of interest" description="Disordered" evidence="3">
    <location>
        <begin position="1266"/>
        <end position="1338"/>
    </location>
</feature>
<feature type="compositionally biased region" description="Basic residues" evidence="3">
    <location>
        <begin position="28"/>
        <end position="39"/>
    </location>
</feature>
<feature type="compositionally biased region" description="Low complexity" evidence="3">
    <location>
        <begin position="1217"/>
        <end position="1226"/>
    </location>
</feature>
<feature type="compositionally biased region" description="Polar residues" evidence="3">
    <location>
        <begin position="1276"/>
        <end position="1293"/>
    </location>
</feature>
<feature type="glycosylation site" description="N-linked (GlcNAc...) asparagine" evidence="1">
    <location>
        <position position="141"/>
    </location>
</feature>
<feature type="glycosylation site" description="N-linked (GlcNAc...) asparagine" evidence="1">
    <location>
        <position position="312"/>
    </location>
</feature>
<feature type="glycosylation site" description="N-linked (GlcNAc...) asparagine" evidence="1">
    <location>
        <position position="349"/>
    </location>
</feature>
<feature type="glycosylation site" description="N-linked (GlcNAc...) asparagine" evidence="1">
    <location>
        <position position="414"/>
    </location>
</feature>
<feature type="glycosylation site" description="N-linked (GlcNAc...) asparagine" evidence="1">
    <location>
        <position position="827"/>
    </location>
</feature>
<feature type="glycosylation site" description="N-linked (GlcNAc...) asparagine" evidence="1">
    <location>
        <position position="874"/>
    </location>
</feature>
<feature type="glycosylation site" description="N-linked (GlcNAc...) asparagine" evidence="1">
    <location>
        <position position="999"/>
    </location>
</feature>
<reference key="1">
    <citation type="journal article" date="1996" name="Development">
        <title>Conservation in hedgehog signaling: induction of a chicken patched homolog by Sonic hedgehog in the developing limb.</title>
        <authorList>
            <person name="Marigo V."/>
            <person name="Scott M.P."/>
            <person name="Johnson R.L."/>
            <person name="Goodrich L.V."/>
            <person name="Tabin C.J."/>
        </authorList>
    </citation>
    <scope>NUCLEOTIDE SEQUENCE [MRNA]</scope>
    <source>
        <tissue>Limb bud</tissue>
    </source>
</reference>
<reference key="2">
    <citation type="journal article" date="1996" name="Nature">
        <title>Biochemical evidence that patched is the Hedgehog receptor.</title>
        <authorList>
            <person name="Marigo V."/>
            <person name="Davey R.A."/>
            <person name="Zuo Y."/>
            <person name="Cunningham J.M."/>
            <person name="Tabin C.J."/>
        </authorList>
    </citation>
    <scope>CHARACTERIZATION</scope>
</reference>
<sequence>MASAADALEPESGSSTAGGGSHPVRAARSARGRRRRSGGTRRAAAPDREYLQRPSYCDAAFALEQIAKGRATGRRAPLWLRAKFQRLLFNLGCYIQKNCGKFLVVGLLYSAFAVGLRAANLETNVEELWVEVGGRVSRELNYTRQKIGEEAMFNPQLMIQTPQEDGTNVLTTEALRQHLDSALQASRVHVYMYNRQWKLEHLCYKSGELITEAGYMDQIIEYLYPCLIITPLDCFWEGAKLQSGTAYLLGKPPLQWINFDPLEFLEELKKINYQVESWEEMLNKAEVGHGYMDRPCLNPADPDCPITAPNKNSTKPLDVALVLSGGCYGLSRKYMHWQEELIIGGTVKNSSGKLVSAQALQTMFQLMTPKQMYEHFKGYEYVSHINWNEDKAAAILEAWQRMYVEVVHQSVAQNSTQKVLSFTTTTLDDILKSFSDVSVIRVASGYLLMLAYACLTMLRWDCAKSQGAVGLAGVLLVALSVAAGLGLCSLIGISFNAATTQVLPFLALGVGVDDVFLLAHAFSETGQNKRIPFEDRTGECLKRTGASVALTSISNVTAFFMAALIPIPALRAFSLQAAVVVVFNFAMVLLIFPAILSMDLYRREDRRLDIFCCFTSPCVTRVIQIEPQAYAENDNICYSSPPPYSSHSFAHETQITMQSTVQLRTEYDPHTQAYYTTAEPRSEISVQPVTVTQDSLSCQSPESASSTRDLLSQFSDSSVHCLEPPCTKWTLSTFAEKHYAPFLLKPKAKVVVIFLFLGLLGLSLYGTTRVRDGLDLTDIVPRDTREYDFIAAQFKYFSFYNMYIVTQKADYPNVQHLLYELHRSFSNVTYVLLEGDRQLPKMWLHYFRDWLQGLQDAFDSDWETGKITYSNYKNGSDDAVLAYKLLVQTGNRAKPIDISQLTKQRLVDADGIINPNAFYIYLTAWVSNDPVAYAASQANIRPHRPEWVHDKADYMPETRLRIPAAEPIEYAQFPFYLNGLRETSDFVEAIEKVRAICNNYTSLGIASYPNGYPFLFWEQYIGLRHWLLLSISVVLACTFLVCALFLLNPWTAGIIVVVLALMTVELFGMMGLIGIKLSAVPVVILIASVGIGVEFTVHIALAFLTAIGDKNRRAVLALEHMFAPVLDGAVSTLLGVLMLAGSEFDFIVRYFFAVLAILTILGVLNGLVLLPVLLSFFGPYPEVSPACGRNRLPTPSPEPPPSIVRFALPPGHTNNGSDSSDSEYSSQTTVSGISEELHHYEATQSPGIPVHQVVVEATENPVFARSTVVQPESRHQSSPRLQSNPEAGTQQVWHQGRQPKQEVREGLRPPPYRPRRDAFEISTEGHSGPSNKDRLNHKAHSHNMRSPAFGAMGVPGSAYCQPITTVTASASVTVAVHPAVHSHNSCRGSFPSCEEYNEDDRGMFEDPHVPFNVRCERRNSKVEVIELQDVECEERTAGKISE</sequence>